<evidence type="ECO:0000255" key="1">
    <source>
        <dbReference type="HAMAP-Rule" id="MF_00659"/>
    </source>
</evidence>
<protein>
    <recommendedName>
        <fullName evidence="1">UPF0250 protein XOO3732</fullName>
    </recommendedName>
</protein>
<feature type="chain" id="PRO_1000061907" description="UPF0250 protein XOO3732">
    <location>
        <begin position="1"/>
        <end position="92"/>
    </location>
</feature>
<accession>Q2NYZ0</accession>
<organism>
    <name type="scientific">Xanthomonas oryzae pv. oryzae (strain MAFF 311018)</name>
    <dbReference type="NCBI Taxonomy" id="342109"/>
    <lineage>
        <taxon>Bacteria</taxon>
        <taxon>Pseudomonadati</taxon>
        <taxon>Pseudomonadota</taxon>
        <taxon>Gammaproteobacteria</taxon>
        <taxon>Lysobacterales</taxon>
        <taxon>Lysobacteraceae</taxon>
        <taxon>Xanthomonas</taxon>
    </lineage>
</organism>
<proteinExistence type="inferred from homology"/>
<dbReference type="EMBL" id="AP008229">
    <property type="protein sequence ID" value="BAE70487.1"/>
    <property type="molecule type" value="Genomic_DNA"/>
</dbReference>
<dbReference type="RefSeq" id="WP_011409453.1">
    <property type="nucleotide sequence ID" value="NC_007705.1"/>
</dbReference>
<dbReference type="SMR" id="Q2NYZ0"/>
<dbReference type="KEGG" id="xom:XOO3732"/>
<dbReference type="HOGENOM" id="CLU_161438_1_1_6"/>
<dbReference type="Gene3D" id="3.30.70.260">
    <property type="match status" value="1"/>
</dbReference>
<dbReference type="HAMAP" id="MF_00659">
    <property type="entry name" value="UPF0250"/>
    <property type="match status" value="1"/>
</dbReference>
<dbReference type="InterPro" id="IPR007454">
    <property type="entry name" value="UPF0250_YbeD-like"/>
</dbReference>
<dbReference type="InterPro" id="IPR027471">
    <property type="entry name" value="YbeD-like_sf"/>
</dbReference>
<dbReference type="NCBIfam" id="NF002066">
    <property type="entry name" value="PRK00907.1"/>
    <property type="match status" value="1"/>
</dbReference>
<dbReference type="Pfam" id="PF04359">
    <property type="entry name" value="DUF493"/>
    <property type="match status" value="1"/>
</dbReference>
<dbReference type="SUPFAM" id="SSF117991">
    <property type="entry name" value="YbeD/HP0495-like"/>
    <property type="match status" value="1"/>
</dbReference>
<reference key="1">
    <citation type="journal article" date="2005" name="Jpn. Agric. Res. Q.">
        <title>Genome sequence of Xanthomonas oryzae pv. oryzae suggests contribution of large numbers of effector genes and insertion sequences to its race diversity.</title>
        <authorList>
            <person name="Ochiai H."/>
            <person name="Inoue Y."/>
            <person name="Takeya M."/>
            <person name="Sasaki A."/>
            <person name="Kaku H."/>
        </authorList>
    </citation>
    <scope>NUCLEOTIDE SEQUENCE [LARGE SCALE GENOMIC DNA]</scope>
    <source>
        <strain>MAFF 311018</strain>
    </source>
</reference>
<name>Y3732_XANOM</name>
<gene>
    <name type="ordered locus">XOO3732</name>
</gene>
<comment type="similarity">
    <text evidence="1">Belongs to the UPF0250 family.</text>
</comment>
<sequence>MDISTDNPDHGFQFPGTFELSAMGAAERGLETELPRLLAATGVELLQESVSWKHSSSGKYVSVKIGFRAESREQFDAAHQALRDHPEVKWTL</sequence>